<keyword id="KW-1185">Reference proteome</keyword>
<sequence>MMGWNTVERNWKELKGKLKETWGDMTDDELDVIAGKREQLVGKIQTKYEIAREEAERQVNAFAHDCDAAKEPLKNVGEAVSSRQKSVKKRSLYT</sequence>
<reference key="1">
    <citation type="journal article" date="2003" name="J. Bacteriol.">
        <title>Complete genome sequence of the ammonia-oxidizing bacterium and obligate chemolithoautotroph Nitrosomonas europaea.</title>
        <authorList>
            <person name="Chain P."/>
            <person name="Lamerdin J.E."/>
            <person name="Larimer F.W."/>
            <person name="Regala W."/>
            <person name="Lao V."/>
            <person name="Land M.L."/>
            <person name="Hauser L."/>
            <person name="Hooper A.B."/>
            <person name="Klotz M.G."/>
            <person name="Norton J."/>
            <person name="Sayavedra-Soto L.A."/>
            <person name="Arciero D.M."/>
            <person name="Hommes N.G."/>
            <person name="Whittaker M.M."/>
            <person name="Arp D.J."/>
        </authorList>
    </citation>
    <scope>NUCLEOTIDE SEQUENCE [LARGE SCALE GENOMIC DNA]</scope>
    <source>
        <strain>ATCC 19718 / CIP 103999 / KCTC 2705 / NBRC 14298</strain>
    </source>
</reference>
<proteinExistence type="inferred from homology"/>
<gene>
    <name type="ordered locus">NE2439</name>
</gene>
<protein>
    <recommendedName>
        <fullName>UPF0337 protein NE2439</fullName>
    </recommendedName>
</protein>
<comment type="similarity">
    <text evidence="2">Belongs to the UPF0337 (CsbD) family.</text>
</comment>
<comment type="sequence caution" evidence="2">
    <conflict type="erroneous initiation">
        <sequence resource="EMBL-CDS" id="CAD86351"/>
    </conflict>
</comment>
<organism>
    <name type="scientific">Nitrosomonas europaea (strain ATCC 19718 / CIP 103999 / KCTC 2705 / NBRC 14298)</name>
    <dbReference type="NCBI Taxonomy" id="228410"/>
    <lineage>
        <taxon>Bacteria</taxon>
        <taxon>Pseudomonadati</taxon>
        <taxon>Pseudomonadota</taxon>
        <taxon>Betaproteobacteria</taxon>
        <taxon>Nitrosomonadales</taxon>
        <taxon>Nitrosomonadaceae</taxon>
        <taxon>Nitrosomonas</taxon>
    </lineage>
</organism>
<dbReference type="EMBL" id="AL954747">
    <property type="protein sequence ID" value="CAD86351.1"/>
    <property type="status" value="ALT_INIT"/>
    <property type="molecule type" value="Genomic_DNA"/>
</dbReference>
<dbReference type="SMR" id="Q82SA7"/>
<dbReference type="STRING" id="228410.NE2439"/>
<dbReference type="KEGG" id="neu:NE2439"/>
<dbReference type="eggNOG" id="COG3237">
    <property type="taxonomic scope" value="Bacteria"/>
</dbReference>
<dbReference type="HOGENOM" id="CLU_135567_4_1_4"/>
<dbReference type="PhylomeDB" id="Q82SA7"/>
<dbReference type="Proteomes" id="UP000001416">
    <property type="component" value="Chromosome"/>
</dbReference>
<dbReference type="Gene3D" id="1.10.1470.10">
    <property type="entry name" value="YjbJ"/>
    <property type="match status" value="1"/>
</dbReference>
<dbReference type="InterPro" id="IPR008462">
    <property type="entry name" value="CsbD"/>
</dbReference>
<dbReference type="InterPro" id="IPR050423">
    <property type="entry name" value="UPF0337_stress_rsp"/>
</dbReference>
<dbReference type="InterPro" id="IPR036629">
    <property type="entry name" value="YjbJ_sf"/>
</dbReference>
<dbReference type="PANTHER" id="PTHR34977">
    <property type="entry name" value="UPF0337 PROTEIN YJBJ"/>
    <property type="match status" value="1"/>
</dbReference>
<dbReference type="PANTHER" id="PTHR34977:SF1">
    <property type="entry name" value="UPF0337 PROTEIN YJBJ"/>
    <property type="match status" value="1"/>
</dbReference>
<dbReference type="Pfam" id="PF05532">
    <property type="entry name" value="CsbD"/>
    <property type="match status" value="1"/>
</dbReference>
<dbReference type="SUPFAM" id="SSF69047">
    <property type="entry name" value="Hypothetical protein YjbJ"/>
    <property type="match status" value="1"/>
</dbReference>
<name>Y2439_NITEU</name>
<feature type="chain" id="PRO_0000210012" description="UPF0337 protein NE2439">
    <location>
        <begin position="1"/>
        <end position="94"/>
    </location>
</feature>
<feature type="region of interest" description="Disordered" evidence="1">
    <location>
        <begin position="74"/>
        <end position="94"/>
    </location>
</feature>
<feature type="compositionally biased region" description="Basic residues" evidence="1">
    <location>
        <begin position="85"/>
        <end position="94"/>
    </location>
</feature>
<accession>Q82SA7</accession>
<evidence type="ECO:0000256" key="1">
    <source>
        <dbReference type="SAM" id="MobiDB-lite"/>
    </source>
</evidence>
<evidence type="ECO:0000305" key="2"/>